<accession>A7FPZ9</accession>
<evidence type="ECO:0000255" key="1">
    <source>
        <dbReference type="HAMAP-Rule" id="MF_00621"/>
    </source>
</evidence>
<gene>
    <name evidence="1" type="primary">codY</name>
    <name type="ordered locus">CLB_2300</name>
</gene>
<dbReference type="EMBL" id="CP000726">
    <property type="protein sequence ID" value="ABS33369.1"/>
    <property type="molecule type" value="Genomic_DNA"/>
</dbReference>
<dbReference type="RefSeq" id="WP_003362579.1">
    <property type="nucleotide sequence ID" value="NC_009697.1"/>
</dbReference>
<dbReference type="SMR" id="A7FPZ9"/>
<dbReference type="GeneID" id="92939187"/>
<dbReference type="KEGG" id="cba:CLB_2300"/>
<dbReference type="HOGENOM" id="CLU_089581_0_0_9"/>
<dbReference type="GO" id="GO:0005737">
    <property type="term" value="C:cytoplasm"/>
    <property type="evidence" value="ECO:0007669"/>
    <property type="project" value="UniProtKB-SubCell"/>
</dbReference>
<dbReference type="GO" id="GO:0003677">
    <property type="term" value="F:DNA binding"/>
    <property type="evidence" value="ECO:0007669"/>
    <property type="project" value="UniProtKB-UniRule"/>
</dbReference>
<dbReference type="GO" id="GO:0003700">
    <property type="term" value="F:DNA-binding transcription factor activity"/>
    <property type="evidence" value="ECO:0007669"/>
    <property type="project" value="InterPro"/>
</dbReference>
<dbReference type="GO" id="GO:0005525">
    <property type="term" value="F:GTP binding"/>
    <property type="evidence" value="ECO:0007669"/>
    <property type="project" value="InterPro"/>
</dbReference>
<dbReference type="GO" id="GO:0045892">
    <property type="term" value="P:negative regulation of DNA-templated transcription"/>
    <property type="evidence" value="ECO:0007669"/>
    <property type="project" value="UniProtKB-UniRule"/>
</dbReference>
<dbReference type="FunFam" id="1.10.10.10:FF:000034">
    <property type="entry name" value="GTP-sensing transcriptional pleiotropic repressor CodY"/>
    <property type="match status" value="1"/>
</dbReference>
<dbReference type="FunFam" id="3.30.450.40:FF:000003">
    <property type="entry name" value="GTP-sensing transcriptional pleiotropic repressor CodY"/>
    <property type="match status" value="1"/>
</dbReference>
<dbReference type="Gene3D" id="3.30.450.40">
    <property type="match status" value="1"/>
</dbReference>
<dbReference type="Gene3D" id="1.10.10.10">
    <property type="entry name" value="Winged helix-like DNA-binding domain superfamily/Winged helix DNA-binding domain"/>
    <property type="match status" value="1"/>
</dbReference>
<dbReference type="HAMAP" id="MF_00621">
    <property type="entry name" value="HTH_type_CodY"/>
    <property type="match status" value="1"/>
</dbReference>
<dbReference type="InterPro" id="IPR014154">
    <property type="entry name" value="CodY"/>
</dbReference>
<dbReference type="InterPro" id="IPR029016">
    <property type="entry name" value="GAF-like_dom_sf"/>
</dbReference>
<dbReference type="InterPro" id="IPR013198">
    <property type="entry name" value="GTP_trans_reg_CodY_C"/>
</dbReference>
<dbReference type="InterPro" id="IPR010312">
    <property type="entry name" value="Transc_reg_CodY_N"/>
</dbReference>
<dbReference type="InterPro" id="IPR036388">
    <property type="entry name" value="WH-like_DNA-bd_sf"/>
</dbReference>
<dbReference type="InterPro" id="IPR036390">
    <property type="entry name" value="WH_DNA-bd_sf"/>
</dbReference>
<dbReference type="NCBIfam" id="TIGR02787">
    <property type="entry name" value="codY_Gpos"/>
    <property type="match status" value="1"/>
</dbReference>
<dbReference type="NCBIfam" id="NF003170">
    <property type="entry name" value="PRK04158.1"/>
    <property type="match status" value="1"/>
</dbReference>
<dbReference type="PANTHER" id="PTHR40062:SF1">
    <property type="entry name" value="GLOBAL TRANSCRIPTIONAL REGULATOR CODY"/>
    <property type="match status" value="1"/>
</dbReference>
<dbReference type="PANTHER" id="PTHR40062">
    <property type="entry name" value="GTP-SENSING TRANSCRIPTIONAL PLEIOTROPIC REPRESSOR CODY"/>
    <property type="match status" value="1"/>
</dbReference>
<dbReference type="Pfam" id="PF06018">
    <property type="entry name" value="CodY"/>
    <property type="match status" value="1"/>
</dbReference>
<dbReference type="Pfam" id="PF08222">
    <property type="entry name" value="HTH_CodY"/>
    <property type="match status" value="1"/>
</dbReference>
<dbReference type="PIRSF" id="PIRSF011572">
    <property type="entry name" value="GTP_sensing_CodY"/>
    <property type="match status" value="1"/>
</dbReference>
<dbReference type="SUPFAM" id="SSF55781">
    <property type="entry name" value="GAF domain-like"/>
    <property type="match status" value="1"/>
</dbReference>
<dbReference type="SUPFAM" id="SSF46785">
    <property type="entry name" value="Winged helix' DNA-binding domain"/>
    <property type="match status" value="1"/>
</dbReference>
<name>CODY_CLOB1</name>
<reference key="1">
    <citation type="journal article" date="2007" name="PLoS ONE">
        <title>Analysis of the neurotoxin complex genes in Clostridium botulinum A1-A4 and B1 strains: BoNT/A3, /Ba4 and /B1 clusters are located within plasmids.</title>
        <authorList>
            <person name="Smith T.J."/>
            <person name="Hill K.K."/>
            <person name="Foley B.T."/>
            <person name="Detter J.C."/>
            <person name="Munk A.C."/>
            <person name="Bruce D.C."/>
            <person name="Doggett N.A."/>
            <person name="Smith L.A."/>
            <person name="Marks J.D."/>
            <person name="Xie G."/>
            <person name="Brettin T.S."/>
        </authorList>
    </citation>
    <scope>NUCLEOTIDE SEQUENCE [LARGE SCALE GENOMIC DNA]</scope>
    <source>
        <strain>ATCC 19397 / Type A</strain>
    </source>
</reference>
<proteinExistence type="inferred from homology"/>
<organism>
    <name type="scientific">Clostridium botulinum (strain ATCC 19397 / Type A)</name>
    <dbReference type="NCBI Taxonomy" id="441770"/>
    <lineage>
        <taxon>Bacteria</taxon>
        <taxon>Bacillati</taxon>
        <taxon>Bacillota</taxon>
        <taxon>Clostridia</taxon>
        <taxon>Eubacteriales</taxon>
        <taxon>Clostridiaceae</taxon>
        <taxon>Clostridium</taxon>
    </lineage>
</organism>
<comment type="function">
    <text evidence="1">DNA-binding global transcriptional regulator which is involved in the adaptive response to starvation and acts by directly or indirectly controlling the expression of numerous genes in response to nutrient availability. During rapid exponential growth, CodY is highly active and represses genes whose products allow adaptation to nutrient depletion.</text>
</comment>
<comment type="subcellular location">
    <subcellularLocation>
        <location evidence="1">Cytoplasm</location>
    </subcellularLocation>
</comment>
<comment type="similarity">
    <text evidence="1">Belongs to the CodY family.</text>
</comment>
<feature type="chain" id="PRO_1000051532" description="Global transcriptional regulator CodY">
    <location>
        <begin position="1"/>
        <end position="258"/>
    </location>
</feature>
<feature type="DNA-binding region" description="H-T-H motif" evidence="1">
    <location>
        <begin position="204"/>
        <end position="223"/>
    </location>
</feature>
<feature type="region of interest" description="GAF domain" evidence="1">
    <location>
        <begin position="1"/>
        <end position="156"/>
    </location>
</feature>
<keyword id="KW-0963">Cytoplasm</keyword>
<keyword id="KW-0238">DNA-binding</keyword>
<keyword id="KW-0678">Repressor</keyword>
<keyword id="KW-0804">Transcription</keyword>
<keyword id="KW-0805">Transcription regulation</keyword>
<sequence length="258" mass="29042">MSSLLDKTRMLNRILQKSGTEPVDFEDICDLLSDVLACNVYIISRKGKILGSKFYSGFECDEVREVVLKENRFPDFYNNKLLNVNETLSNSPNHDKCVFDNLKDCSINNKLSTIVPINGNRERLGTLLLARFDKEFTDEDLVLAEYSATIIGLEILRSKQDQIEEEARKKAVVQLAIGTLSYSELEAVEHIFNELDGTEGLLVASKIADKVGITRSVIVNALRKFESAGVIESRSLGMKGTHIRILNDKLLEELKKIK</sequence>
<protein>
    <recommendedName>
        <fullName evidence="1">Global transcriptional regulator CodY</fullName>
    </recommendedName>
</protein>